<gene>
    <name type="primary">KCNJ12</name>
</gene>
<feature type="chain" id="PRO_0000154961" description="ATP-sensitive inward rectifier potassium channel 12">
    <location>
        <begin position="1"/>
        <end position="427"/>
    </location>
</feature>
<feature type="topological domain" description="Cytoplasmic" evidence="2">
    <location>
        <begin position="1"/>
        <end position="77"/>
    </location>
</feature>
<feature type="transmembrane region" description="Helical; Name=M1" evidence="2">
    <location>
        <begin position="78"/>
        <end position="104"/>
    </location>
</feature>
<feature type="topological domain" description="Extracellular" evidence="2">
    <location>
        <begin position="105"/>
        <end position="129"/>
    </location>
</feature>
<feature type="intramembrane region" description="Helical; Pore-forming; Name=H5" evidence="2">
    <location>
        <begin position="130"/>
        <end position="146"/>
    </location>
</feature>
<feature type="topological domain" description="Extracellular" evidence="2">
    <location>
        <begin position="147"/>
        <end position="155"/>
    </location>
</feature>
<feature type="transmembrane region" description="Helical; Name=M2" evidence="2">
    <location>
        <begin position="156"/>
        <end position="183"/>
    </location>
</feature>
<feature type="topological domain" description="Cytoplasmic" evidence="2">
    <location>
        <begin position="184"/>
        <end position="427"/>
    </location>
</feature>
<feature type="region of interest" description="Disordered" evidence="8">
    <location>
        <begin position="387"/>
        <end position="427"/>
    </location>
</feature>
<feature type="short sequence motif" description="Selectivity filter" evidence="2">
    <location>
        <begin position="143"/>
        <end position="148"/>
    </location>
</feature>
<feature type="short sequence motif" description="PDZ-binding" evidence="7">
    <location>
        <begin position="425"/>
        <end position="427"/>
    </location>
</feature>
<feature type="compositionally biased region" description="Acidic residues" evidence="8">
    <location>
        <begin position="387"/>
        <end position="396"/>
    </location>
</feature>
<feature type="binding site" evidence="2">
    <location>
        <position position="79"/>
    </location>
    <ligand>
        <name>a 1,2-diacyl-sn-glycero-3-phospho-(1D-myo-inositol-4,5-bisphosphate)</name>
        <dbReference type="ChEBI" id="CHEBI:58456"/>
        <note>agonist</note>
    </ligand>
</feature>
<feature type="binding site" evidence="2">
    <location>
        <position position="81"/>
    </location>
    <ligand>
        <name>a 1,2-diacyl-sn-glycero-3-phospho-(1D-myo-inositol-4,5-bisphosphate)</name>
        <dbReference type="ChEBI" id="CHEBI:58456"/>
        <note>agonist</note>
    </ligand>
</feature>
<feature type="binding site" evidence="2">
    <location>
        <position position="143"/>
    </location>
    <ligand>
        <name>K(+)</name>
        <dbReference type="ChEBI" id="CHEBI:29103"/>
        <label>1</label>
        <note>ligand likely shared between the subunits of the homotetramer</note>
    </ligand>
</feature>
<feature type="binding site" evidence="2">
    <location>
        <position position="143"/>
    </location>
    <ligand>
        <name>K(+)</name>
        <dbReference type="ChEBI" id="CHEBI:29103"/>
        <label>2</label>
        <note>ligand likely shared between the subunits of the homotetramer</note>
    </ligand>
</feature>
<feature type="binding site" evidence="2">
    <location>
        <position position="144"/>
    </location>
    <ligand>
        <name>K(+)</name>
        <dbReference type="ChEBI" id="CHEBI:29103"/>
        <label>2</label>
        <note>ligand likely shared between the subunits of the homotetramer</note>
    </ligand>
</feature>
<feature type="binding site" evidence="2">
    <location>
        <position position="144"/>
    </location>
    <ligand>
        <name>K(+)</name>
        <dbReference type="ChEBI" id="CHEBI:29103"/>
        <label>3</label>
        <note>ligand likely shared between the subunits of the homotetramer</note>
    </ligand>
</feature>
<feature type="binding site" evidence="2">
    <location>
        <position position="145"/>
    </location>
    <ligand>
        <name>K(+)</name>
        <dbReference type="ChEBI" id="CHEBI:29103"/>
        <label>3</label>
        <note>ligand likely shared between the subunits of the homotetramer</note>
    </ligand>
</feature>
<feature type="binding site" evidence="2">
    <location>
        <position position="145"/>
    </location>
    <ligand>
        <name>K(+)</name>
        <dbReference type="ChEBI" id="CHEBI:29103"/>
        <label>4</label>
        <note>ligand likely shared between the subunits of the homotetramer</note>
    </ligand>
</feature>
<feature type="binding site" evidence="2">
    <location>
        <position position="146"/>
    </location>
    <ligand>
        <name>K(+)</name>
        <dbReference type="ChEBI" id="CHEBI:29103"/>
        <label>4</label>
        <note>ligand likely shared between the subunits of the homotetramer</note>
    </ligand>
</feature>
<feature type="binding site" evidence="2">
    <location>
        <position position="183"/>
    </location>
    <ligand>
        <name>a 1,2-diacyl-sn-glycero-3-phospho-(1D-myo-inositol-4,5-bisphosphate)</name>
        <dbReference type="ChEBI" id="CHEBI:58456"/>
        <note>agonist</note>
    </ligand>
</feature>
<feature type="binding site" evidence="2">
    <location>
        <position position="188"/>
    </location>
    <ligand>
        <name>a 1,2-diacyl-sn-glycero-3-phospho-(1D-myo-inositol-4,5-bisphosphate)</name>
        <dbReference type="ChEBI" id="CHEBI:58456"/>
        <note>agonist</note>
    </ligand>
</feature>
<feature type="site" description="Role in the control of polyamine-mediated channel gating and in the blocking by intracellular magnesium" evidence="1">
    <location>
        <position position="173"/>
    </location>
</feature>
<feature type="modified residue" description="S-nitrosocysteine" evidence="5">
    <location>
        <position position="75"/>
    </location>
</feature>
<feature type="disulfide bond" evidence="2">
    <location>
        <begin position="123"/>
        <end position="155"/>
    </location>
</feature>
<dbReference type="EMBL" id="DQ023214">
    <property type="protein sequence ID" value="AAY53910.1"/>
    <property type="molecule type" value="mRNA"/>
</dbReference>
<dbReference type="RefSeq" id="XP_005220652.2">
    <property type="nucleotide sequence ID" value="XM_005220595.5"/>
</dbReference>
<dbReference type="SMR" id="Q4TZY1"/>
<dbReference type="FunCoup" id="Q4TZY1">
    <property type="interactions" value="172"/>
</dbReference>
<dbReference type="STRING" id="9913.ENSBTAP00000056563"/>
<dbReference type="PaxDb" id="9913-ENSBTAP00000056563"/>
<dbReference type="Ensembl" id="ENSBTAT00000092353.1">
    <property type="protein sequence ID" value="ENSBTAP00000100962.1"/>
    <property type="gene ID" value="ENSBTAG00000020061.6"/>
</dbReference>
<dbReference type="Ensembl" id="ENSBTAT00000100620.1">
    <property type="protein sequence ID" value="ENSBTAP00000078134.1"/>
    <property type="gene ID" value="ENSBTAG00000020061.6"/>
</dbReference>
<dbReference type="Ensembl" id="ENSBTAT00000114144.1">
    <property type="protein sequence ID" value="ENSBTAP00000086488.1"/>
    <property type="gene ID" value="ENSBTAG00000020061.6"/>
</dbReference>
<dbReference type="Ensembl" id="ENSBTAT00000119931.1">
    <property type="protein sequence ID" value="ENSBTAP00000077541.1"/>
    <property type="gene ID" value="ENSBTAG00000020061.6"/>
</dbReference>
<dbReference type="Ensembl" id="ENSBTAT00000133727.1">
    <property type="protein sequence ID" value="ENSBTAP00000081544.1"/>
    <property type="gene ID" value="ENSBTAG00000020061.6"/>
</dbReference>
<dbReference type="GeneID" id="538479"/>
<dbReference type="CTD" id="3768"/>
<dbReference type="VEuPathDB" id="HostDB:ENSBTAG00000020061"/>
<dbReference type="eggNOG" id="KOG3827">
    <property type="taxonomic scope" value="Eukaryota"/>
</dbReference>
<dbReference type="GeneTree" id="ENSGT01030000234586"/>
<dbReference type="InParanoid" id="Q4TZY1"/>
<dbReference type="OMA" id="TMHGMNG"/>
<dbReference type="OrthoDB" id="273257at2759"/>
<dbReference type="Reactome" id="R-BTA-1296041">
    <property type="pathway name" value="Activation of G protein gated Potassium channels"/>
</dbReference>
<dbReference type="Reactome" id="R-BTA-1296053">
    <property type="pathway name" value="Classical Kir channels"/>
</dbReference>
<dbReference type="Reactome" id="R-BTA-5576886">
    <property type="pathway name" value="Phase 4 - resting membrane potential"/>
</dbReference>
<dbReference type="Reactome" id="R-BTA-997272">
    <property type="pathway name" value="Inhibition of voltage gated Ca2+ channels via Gbeta/gamma subunits"/>
</dbReference>
<dbReference type="Proteomes" id="UP000009136">
    <property type="component" value="Chromosome 19"/>
</dbReference>
<dbReference type="Bgee" id="ENSBTAG00000020061">
    <property type="expression patterns" value="Expressed in choroid plexus and 64 other cell types or tissues"/>
</dbReference>
<dbReference type="GO" id="GO:0016020">
    <property type="term" value="C:membrane"/>
    <property type="evidence" value="ECO:0000250"/>
    <property type="project" value="UniProtKB"/>
</dbReference>
<dbReference type="GO" id="GO:0034702">
    <property type="term" value="C:monoatomic ion channel complex"/>
    <property type="evidence" value="ECO:0007669"/>
    <property type="project" value="UniProtKB-KW"/>
</dbReference>
<dbReference type="GO" id="GO:0005886">
    <property type="term" value="C:plasma membrane"/>
    <property type="evidence" value="ECO:0000318"/>
    <property type="project" value="GO_Central"/>
</dbReference>
<dbReference type="GO" id="GO:0005242">
    <property type="term" value="F:inward rectifier potassium channel activity"/>
    <property type="evidence" value="ECO:0000250"/>
    <property type="project" value="UniProtKB"/>
</dbReference>
<dbReference type="GO" id="GO:0046872">
    <property type="term" value="F:metal ion binding"/>
    <property type="evidence" value="ECO:0007669"/>
    <property type="project" value="UniProtKB-KW"/>
</dbReference>
<dbReference type="GO" id="GO:1990573">
    <property type="term" value="P:potassium ion import across plasma membrane"/>
    <property type="evidence" value="ECO:0000318"/>
    <property type="project" value="GO_Central"/>
</dbReference>
<dbReference type="GO" id="GO:0006813">
    <property type="term" value="P:potassium ion transport"/>
    <property type="evidence" value="ECO:0000250"/>
    <property type="project" value="UniProtKB"/>
</dbReference>
<dbReference type="GO" id="GO:0051289">
    <property type="term" value="P:protein homotetramerization"/>
    <property type="evidence" value="ECO:0000250"/>
    <property type="project" value="UniProtKB"/>
</dbReference>
<dbReference type="GO" id="GO:0034765">
    <property type="term" value="P:regulation of monoatomic ion transmembrane transport"/>
    <property type="evidence" value="ECO:0000318"/>
    <property type="project" value="GO_Central"/>
</dbReference>
<dbReference type="FunFam" id="1.10.287.70:FF:000039">
    <property type="entry name" value="ATP-sensitive inward rectifier potassium channel 12"/>
    <property type="match status" value="1"/>
</dbReference>
<dbReference type="FunFam" id="2.60.40.1400:FF:000001">
    <property type="entry name" value="G protein-activated inward rectifier potassium channel 2"/>
    <property type="match status" value="1"/>
</dbReference>
<dbReference type="Gene3D" id="1.10.287.70">
    <property type="match status" value="1"/>
</dbReference>
<dbReference type="Gene3D" id="2.60.40.1400">
    <property type="entry name" value="G protein-activated inward rectifier potassium channel 1"/>
    <property type="match status" value="1"/>
</dbReference>
<dbReference type="InterPro" id="IPR014756">
    <property type="entry name" value="Ig_E-set"/>
</dbReference>
<dbReference type="InterPro" id="IPR041647">
    <property type="entry name" value="IRK_C"/>
</dbReference>
<dbReference type="InterPro" id="IPR016449">
    <property type="entry name" value="K_chnl_inward-rec_Kir"/>
</dbReference>
<dbReference type="InterPro" id="IPR003272">
    <property type="entry name" value="K_chnl_inward-rec_Kir2.2"/>
</dbReference>
<dbReference type="InterPro" id="IPR013518">
    <property type="entry name" value="K_chnl_inward-rec_Kir_cyto"/>
</dbReference>
<dbReference type="InterPro" id="IPR013673">
    <property type="entry name" value="K_chnl_inward-rec_Kir_N"/>
</dbReference>
<dbReference type="InterPro" id="IPR040445">
    <property type="entry name" value="Kir_TM"/>
</dbReference>
<dbReference type="PANTHER" id="PTHR11767:SF14">
    <property type="entry name" value="ATP-SENSITIVE INWARD RECTIFIER POTASSIUM CHANNEL 12-RELATED"/>
    <property type="match status" value="1"/>
</dbReference>
<dbReference type="PANTHER" id="PTHR11767">
    <property type="entry name" value="INWARD RECTIFIER POTASSIUM CHANNEL"/>
    <property type="match status" value="1"/>
</dbReference>
<dbReference type="Pfam" id="PF01007">
    <property type="entry name" value="IRK"/>
    <property type="match status" value="1"/>
</dbReference>
<dbReference type="Pfam" id="PF17655">
    <property type="entry name" value="IRK_C"/>
    <property type="match status" value="1"/>
</dbReference>
<dbReference type="Pfam" id="PF08466">
    <property type="entry name" value="IRK_N"/>
    <property type="match status" value="1"/>
</dbReference>
<dbReference type="PRINTS" id="PR01325">
    <property type="entry name" value="KIR22CHANNEL"/>
</dbReference>
<dbReference type="PRINTS" id="PR01320">
    <property type="entry name" value="KIRCHANNEL"/>
</dbReference>
<dbReference type="SUPFAM" id="SSF81296">
    <property type="entry name" value="E set domains"/>
    <property type="match status" value="1"/>
</dbReference>
<dbReference type="SUPFAM" id="SSF81324">
    <property type="entry name" value="Voltage-gated potassium channels"/>
    <property type="match status" value="1"/>
</dbReference>
<reference key="1">
    <citation type="submission" date="2005-05" db="EMBL/GenBank/DDBJ databases">
        <title>Ion channels in ocular epithelia.</title>
        <authorList>
            <person name="Rae J.L."/>
        </authorList>
    </citation>
    <scope>NUCLEOTIDE SEQUENCE [MRNA]</scope>
    <source>
        <tissue>Corneal endothelium</tissue>
    </source>
</reference>
<comment type="function">
    <text evidence="6">Inward rectifying potassium channel that probably participates in controlling the resting membrane potential in electrically excitable cells. Probably participates in establishing action potential waveform and excitability of neuronal and muscle tissues. Inward rectifier potassium channels are characterized by a greater tendency to allow potassium to flow into the cell rather than out of it. Their voltage dependence is regulated by the concentration of extracellular potassium; as external potassium is raised, the voltage range of the channel opening shifts to more positive voltages. The inward rectification is mainly due to the blockage of outward current by internal magnesium.</text>
</comment>
<comment type="catalytic activity">
    <reaction evidence="3">
        <text>K(+)(in) = K(+)(out)</text>
        <dbReference type="Rhea" id="RHEA:29463"/>
        <dbReference type="ChEBI" id="CHEBI:29103"/>
    </reaction>
</comment>
<comment type="activity regulation">
    <text evidence="2 6">Activated by phosphatidylinositol 4,5-biphosphate (PtdIns(4,5)P2) (By similarity). PtdIns(4,5)P2 binding to the cytoplasmic side of the channel triggers a conformation change leading to channel opening (By similarity).</text>
</comment>
<comment type="subunit">
    <text evidence="4 6">Homotetramer (By similarity). Forms heteromer with KCNJ4 (By similarity). Association, via its PDZ-recognition domain, with LIN7A, LIN7B, LIN7C, DLG1, CASK and APBA1 plays a key role in its localization and trafficking.</text>
</comment>
<comment type="subcellular location">
    <subcellularLocation>
        <location evidence="7">Membrane</location>
        <topology evidence="7">Multi-pass membrane protein</topology>
    </subcellularLocation>
</comment>
<comment type="similarity">
    <text evidence="9">Belongs to the inward rectifier-type potassium channel (TC 1.A.2.1) family. KCNJ12 subfamily.</text>
</comment>
<proteinExistence type="evidence at transcript level"/>
<protein>
    <recommendedName>
        <fullName>ATP-sensitive inward rectifier potassium channel 12</fullName>
    </recommendedName>
    <alternativeName>
        <fullName>Potassium channel, inwardly rectifying subfamily J member 12</fullName>
    </alternativeName>
</protein>
<keyword id="KW-1015">Disulfide bond</keyword>
<keyword id="KW-0407">Ion channel</keyword>
<keyword id="KW-0406">Ion transport</keyword>
<keyword id="KW-0472">Membrane</keyword>
<keyword id="KW-0479">Metal-binding</keyword>
<keyword id="KW-0630">Potassium</keyword>
<keyword id="KW-0633">Potassium transport</keyword>
<keyword id="KW-1185">Reference proteome</keyword>
<keyword id="KW-0702">S-nitrosylation</keyword>
<keyword id="KW-0812">Transmembrane</keyword>
<keyword id="KW-1133">Transmembrane helix</keyword>
<keyword id="KW-0813">Transport</keyword>
<keyword id="KW-0851">Voltage-gated channel</keyword>
<name>KCJ12_BOVIN</name>
<organism>
    <name type="scientific">Bos taurus</name>
    <name type="common">Bovine</name>
    <dbReference type="NCBI Taxonomy" id="9913"/>
    <lineage>
        <taxon>Eukaryota</taxon>
        <taxon>Metazoa</taxon>
        <taxon>Chordata</taxon>
        <taxon>Craniata</taxon>
        <taxon>Vertebrata</taxon>
        <taxon>Euteleostomi</taxon>
        <taxon>Mammalia</taxon>
        <taxon>Eutheria</taxon>
        <taxon>Laurasiatheria</taxon>
        <taxon>Artiodactyla</taxon>
        <taxon>Ruminantia</taxon>
        <taxon>Pecora</taxon>
        <taxon>Bovidae</taxon>
        <taxon>Bovinae</taxon>
        <taxon>Bos</taxon>
    </lineage>
</organism>
<evidence type="ECO:0000250" key="1"/>
<evidence type="ECO:0000250" key="2">
    <source>
        <dbReference type="UniProtKB" id="F1NHE9"/>
    </source>
</evidence>
<evidence type="ECO:0000250" key="3">
    <source>
        <dbReference type="UniProtKB" id="P52187"/>
    </source>
</evidence>
<evidence type="ECO:0000250" key="4">
    <source>
        <dbReference type="UniProtKB" id="P52188"/>
    </source>
</evidence>
<evidence type="ECO:0000250" key="5">
    <source>
        <dbReference type="UniProtKB" id="P63252"/>
    </source>
</evidence>
<evidence type="ECO:0000250" key="6">
    <source>
        <dbReference type="UniProtKB" id="Q14500"/>
    </source>
</evidence>
<evidence type="ECO:0000255" key="7"/>
<evidence type="ECO:0000256" key="8">
    <source>
        <dbReference type="SAM" id="MobiDB-lite"/>
    </source>
</evidence>
<evidence type="ECO:0000305" key="9"/>
<accession>Q4TZY1</accession>
<sequence length="427" mass="48442">MTASGRTNPYSIVSSEEDGLHLVTMSGANGFGNGKVHTRRRCRNRFVKKNGQCNIEFANMDEKSQRYLADMFTTCVDIRWRYMLLIFSLAFLASWLLFGVIFWVIAVAHGDLEPAEAHGRTPCVLQVHGFMAAFLFSIETQTTIGYGLRCVTEECPVAVFMVVAQSIVGCIIDSFMIGAIMAKMARPKKRAQTLLFSHNAVVALRDGKLCLMWRVGNLRKSHIVEAHVRAQLIKPRVTEEGEYIPLDQIDIDVGFDKGLDRIFLVSPITILHEIDEASPLFGISRQDLETDDFEIVVILEGMVEATAMTTQARSSYLANEILWGHRFEPVLFEEKNQYKIDYSHFHKTYEVPSTPRCSAKDLVENKFLLPSTNSFCYENELAFLSRDEEDEVDGEQDSLGPQARRDFDRPQAGTALEQRPYRRESEI</sequence>